<name>CPIN1_MOUSE</name>
<gene>
    <name evidence="2" type="primary">Ciapin1</name>
</gene>
<proteinExistence type="evidence at protein level"/>
<feature type="chain" id="PRO_0000079289" description="Anamorsin">
    <location>
        <begin position="1"/>
        <end position="309"/>
    </location>
</feature>
<feature type="region of interest" description="N-terminal SAM-like domain" evidence="2">
    <location>
        <begin position="6"/>
        <end position="172"/>
    </location>
</feature>
<feature type="region of interest" description="Linker" evidence="2">
    <location>
        <begin position="173"/>
        <end position="222"/>
    </location>
</feature>
<feature type="region of interest" description="Fe-S binding site A" evidence="2">
    <location>
        <begin position="235"/>
        <end position="249"/>
    </location>
</feature>
<feature type="region of interest" description="Fe-S binding site B" evidence="2">
    <location>
        <begin position="271"/>
        <end position="285"/>
    </location>
</feature>
<feature type="short sequence motif" description="Cx2C motif 1" evidence="2">
    <location>
        <begin position="271"/>
        <end position="274"/>
    </location>
</feature>
<feature type="short sequence motif" description="Cx2C motif 2" evidence="2">
    <location>
        <begin position="282"/>
        <end position="285"/>
    </location>
</feature>
<feature type="binding site" evidence="2">
    <location>
        <position position="235"/>
    </location>
    <ligand>
        <name>[2Fe-2S] cluster</name>
        <dbReference type="ChEBI" id="CHEBI:190135"/>
    </ligand>
</feature>
<feature type="binding site" evidence="2">
    <location>
        <position position="244"/>
    </location>
    <ligand>
        <name>[2Fe-2S] cluster</name>
        <dbReference type="ChEBI" id="CHEBI:190135"/>
    </ligand>
</feature>
<feature type="binding site" evidence="2">
    <location>
        <position position="247"/>
    </location>
    <ligand>
        <name>[2Fe-2S] cluster</name>
        <dbReference type="ChEBI" id="CHEBI:190135"/>
    </ligand>
</feature>
<feature type="binding site" evidence="2">
    <location>
        <position position="249"/>
    </location>
    <ligand>
        <name>[2Fe-2S] cluster</name>
        <dbReference type="ChEBI" id="CHEBI:190135"/>
    </ligand>
</feature>
<feature type="binding site" evidence="2">
    <location>
        <position position="271"/>
    </location>
    <ligand>
        <name>[4Fe-4S] cluster</name>
        <dbReference type="ChEBI" id="CHEBI:49883"/>
    </ligand>
</feature>
<feature type="binding site" evidence="2">
    <location>
        <position position="274"/>
    </location>
    <ligand>
        <name>[4Fe-4S] cluster</name>
        <dbReference type="ChEBI" id="CHEBI:49883"/>
    </ligand>
</feature>
<feature type="binding site" evidence="2">
    <location>
        <position position="282"/>
    </location>
    <ligand>
        <name>[4Fe-4S] cluster</name>
        <dbReference type="ChEBI" id="CHEBI:49883"/>
    </ligand>
</feature>
<feature type="binding site" evidence="2">
    <location>
        <position position="285"/>
    </location>
    <ligand>
        <name>[4Fe-4S] cluster</name>
        <dbReference type="ChEBI" id="CHEBI:49883"/>
    </ligand>
</feature>
<feature type="modified residue" description="Phosphoserine" evidence="1">
    <location>
        <position position="182"/>
    </location>
</feature>
<feature type="modified residue" description="Phosphoserine" evidence="1">
    <location>
        <position position="183"/>
    </location>
</feature>
<feature type="modified residue" description="Phosphoserine" evidence="1">
    <location>
        <position position="213"/>
    </location>
</feature>
<feature type="modified residue" description="Phosphoserine" evidence="4">
    <location>
        <position position="269"/>
    </location>
</feature>
<feature type="modified residue" description="Phosphoserine" evidence="1">
    <location>
        <position position="302"/>
    </location>
</feature>
<feature type="modified residue" description="Phosphoserine" evidence="1">
    <location>
        <position position="304"/>
    </location>
</feature>
<accession>Q8WTY4</accession>
<accession>Q3UJW5</accession>
<accession>Q8VC24</accession>
<accession>Q91W83</accession>
<sequence length="309" mass="33429">MEEFGISPGQLVAVFWDKSSPEEALKKLVARLQELTGSEGQVFMENVTQLLQSSHKESSFDVILSGVVPGSTSLHSAEVLAEMARILRPGGCLFLKEPVETAEVNNDKMKTASKLCSALTLSGLVEIKELQREALSPEEVQSVQEHLGYHSDSLRSVRVTGKKPNFEVGSSSQLKLPNKKSSSVKPVVDPAAAKLWTLSANDMEDDSVDLIDSDELLDPEDLKRPDPASLKAPSCGEGKKRKACKNCTCGLAEELEREQSKAQSSQPKSACGNCYLGDAFRCANCPYLGMPAFKPGEQVLLSNSNLQDA</sequence>
<evidence type="ECO:0000250" key="1">
    <source>
        <dbReference type="UniProtKB" id="Q6FI81"/>
    </source>
</evidence>
<evidence type="ECO:0000255" key="2">
    <source>
        <dbReference type="HAMAP-Rule" id="MF_03115"/>
    </source>
</evidence>
<evidence type="ECO:0000269" key="3">
    <source>
    </source>
</evidence>
<evidence type="ECO:0007744" key="4">
    <source>
    </source>
</evidence>
<keyword id="KW-0001">2Fe-2S</keyword>
<keyword id="KW-0004">4Fe-4S</keyword>
<keyword id="KW-0053">Apoptosis</keyword>
<keyword id="KW-0963">Cytoplasm</keyword>
<keyword id="KW-0408">Iron</keyword>
<keyword id="KW-0411">Iron-sulfur</keyword>
<keyword id="KW-0479">Metal-binding</keyword>
<keyword id="KW-0496">Mitochondrion</keyword>
<keyword id="KW-0539">Nucleus</keyword>
<keyword id="KW-0597">Phosphoprotein</keyword>
<keyword id="KW-1185">Reference proteome</keyword>
<reference key="1">
    <citation type="journal article" date="2004" name="J. Exp. Med.">
        <title>Identification of a cytokine-induced antiapoptotic molecule anamorsin essential for definitive hematopoiesis.</title>
        <authorList>
            <person name="Shibayama H."/>
            <person name="Takai E."/>
            <person name="Matsumura I."/>
            <person name="Kouno M."/>
            <person name="Morii E."/>
            <person name="Kitamura Y."/>
            <person name="Takeda J."/>
            <person name="Kanakura Y."/>
        </authorList>
    </citation>
    <scope>NUCLEOTIDE SEQUENCE [MRNA]</scope>
    <scope>FUNCTION</scope>
    <scope>SUBCELLULAR LOCATION</scope>
    <scope>INDUCTION</scope>
    <scope>DISRUPTION PHENOTYPE</scope>
</reference>
<reference key="2">
    <citation type="journal article" date="2005" name="Science">
        <title>The transcriptional landscape of the mammalian genome.</title>
        <authorList>
            <person name="Carninci P."/>
            <person name="Kasukawa T."/>
            <person name="Katayama S."/>
            <person name="Gough J."/>
            <person name="Frith M.C."/>
            <person name="Maeda N."/>
            <person name="Oyama R."/>
            <person name="Ravasi T."/>
            <person name="Lenhard B."/>
            <person name="Wells C."/>
            <person name="Kodzius R."/>
            <person name="Shimokawa K."/>
            <person name="Bajic V.B."/>
            <person name="Brenner S.E."/>
            <person name="Batalov S."/>
            <person name="Forrest A.R."/>
            <person name="Zavolan M."/>
            <person name="Davis M.J."/>
            <person name="Wilming L.G."/>
            <person name="Aidinis V."/>
            <person name="Allen J.E."/>
            <person name="Ambesi-Impiombato A."/>
            <person name="Apweiler R."/>
            <person name="Aturaliya R.N."/>
            <person name="Bailey T.L."/>
            <person name="Bansal M."/>
            <person name="Baxter L."/>
            <person name="Beisel K.W."/>
            <person name="Bersano T."/>
            <person name="Bono H."/>
            <person name="Chalk A.M."/>
            <person name="Chiu K.P."/>
            <person name="Choudhary V."/>
            <person name="Christoffels A."/>
            <person name="Clutterbuck D.R."/>
            <person name="Crowe M.L."/>
            <person name="Dalla E."/>
            <person name="Dalrymple B.P."/>
            <person name="de Bono B."/>
            <person name="Della Gatta G."/>
            <person name="di Bernardo D."/>
            <person name="Down T."/>
            <person name="Engstrom P."/>
            <person name="Fagiolini M."/>
            <person name="Faulkner G."/>
            <person name="Fletcher C.F."/>
            <person name="Fukushima T."/>
            <person name="Furuno M."/>
            <person name="Futaki S."/>
            <person name="Gariboldi M."/>
            <person name="Georgii-Hemming P."/>
            <person name="Gingeras T.R."/>
            <person name="Gojobori T."/>
            <person name="Green R.E."/>
            <person name="Gustincich S."/>
            <person name="Harbers M."/>
            <person name="Hayashi Y."/>
            <person name="Hensch T.K."/>
            <person name="Hirokawa N."/>
            <person name="Hill D."/>
            <person name="Huminiecki L."/>
            <person name="Iacono M."/>
            <person name="Ikeo K."/>
            <person name="Iwama A."/>
            <person name="Ishikawa T."/>
            <person name="Jakt M."/>
            <person name="Kanapin A."/>
            <person name="Katoh M."/>
            <person name="Kawasawa Y."/>
            <person name="Kelso J."/>
            <person name="Kitamura H."/>
            <person name="Kitano H."/>
            <person name="Kollias G."/>
            <person name="Krishnan S.P."/>
            <person name="Kruger A."/>
            <person name="Kummerfeld S.K."/>
            <person name="Kurochkin I.V."/>
            <person name="Lareau L.F."/>
            <person name="Lazarevic D."/>
            <person name="Lipovich L."/>
            <person name="Liu J."/>
            <person name="Liuni S."/>
            <person name="McWilliam S."/>
            <person name="Madan Babu M."/>
            <person name="Madera M."/>
            <person name="Marchionni L."/>
            <person name="Matsuda H."/>
            <person name="Matsuzawa S."/>
            <person name="Miki H."/>
            <person name="Mignone F."/>
            <person name="Miyake S."/>
            <person name="Morris K."/>
            <person name="Mottagui-Tabar S."/>
            <person name="Mulder N."/>
            <person name="Nakano N."/>
            <person name="Nakauchi H."/>
            <person name="Ng P."/>
            <person name="Nilsson R."/>
            <person name="Nishiguchi S."/>
            <person name="Nishikawa S."/>
            <person name="Nori F."/>
            <person name="Ohara O."/>
            <person name="Okazaki Y."/>
            <person name="Orlando V."/>
            <person name="Pang K.C."/>
            <person name="Pavan W.J."/>
            <person name="Pavesi G."/>
            <person name="Pesole G."/>
            <person name="Petrovsky N."/>
            <person name="Piazza S."/>
            <person name="Reed J."/>
            <person name="Reid J.F."/>
            <person name="Ring B.Z."/>
            <person name="Ringwald M."/>
            <person name="Rost B."/>
            <person name="Ruan Y."/>
            <person name="Salzberg S.L."/>
            <person name="Sandelin A."/>
            <person name="Schneider C."/>
            <person name="Schoenbach C."/>
            <person name="Sekiguchi K."/>
            <person name="Semple C.A."/>
            <person name="Seno S."/>
            <person name="Sessa L."/>
            <person name="Sheng Y."/>
            <person name="Shibata Y."/>
            <person name="Shimada H."/>
            <person name="Shimada K."/>
            <person name="Silva D."/>
            <person name="Sinclair B."/>
            <person name="Sperling S."/>
            <person name="Stupka E."/>
            <person name="Sugiura K."/>
            <person name="Sultana R."/>
            <person name="Takenaka Y."/>
            <person name="Taki K."/>
            <person name="Tammoja K."/>
            <person name="Tan S.L."/>
            <person name="Tang S."/>
            <person name="Taylor M.S."/>
            <person name="Tegner J."/>
            <person name="Teichmann S.A."/>
            <person name="Ueda H.R."/>
            <person name="van Nimwegen E."/>
            <person name="Verardo R."/>
            <person name="Wei C.L."/>
            <person name="Yagi K."/>
            <person name="Yamanishi H."/>
            <person name="Zabarovsky E."/>
            <person name="Zhu S."/>
            <person name="Zimmer A."/>
            <person name="Hide W."/>
            <person name="Bult C."/>
            <person name="Grimmond S.M."/>
            <person name="Teasdale R.D."/>
            <person name="Liu E.T."/>
            <person name="Brusic V."/>
            <person name="Quackenbush J."/>
            <person name="Wahlestedt C."/>
            <person name="Mattick J.S."/>
            <person name="Hume D.A."/>
            <person name="Kai C."/>
            <person name="Sasaki D."/>
            <person name="Tomaru Y."/>
            <person name="Fukuda S."/>
            <person name="Kanamori-Katayama M."/>
            <person name="Suzuki M."/>
            <person name="Aoki J."/>
            <person name="Arakawa T."/>
            <person name="Iida J."/>
            <person name="Imamura K."/>
            <person name="Itoh M."/>
            <person name="Kato T."/>
            <person name="Kawaji H."/>
            <person name="Kawagashira N."/>
            <person name="Kawashima T."/>
            <person name="Kojima M."/>
            <person name="Kondo S."/>
            <person name="Konno H."/>
            <person name="Nakano K."/>
            <person name="Ninomiya N."/>
            <person name="Nishio T."/>
            <person name="Okada M."/>
            <person name="Plessy C."/>
            <person name="Shibata K."/>
            <person name="Shiraki T."/>
            <person name="Suzuki S."/>
            <person name="Tagami M."/>
            <person name="Waki K."/>
            <person name="Watahiki A."/>
            <person name="Okamura-Oho Y."/>
            <person name="Suzuki H."/>
            <person name="Kawai J."/>
            <person name="Hayashizaki Y."/>
        </authorList>
    </citation>
    <scope>NUCLEOTIDE SEQUENCE [LARGE SCALE MRNA]</scope>
    <source>
        <strain>C57BL/6J</strain>
        <strain>DBA/2J</strain>
        <strain>NOD</strain>
        <tissue>Cerebellum</tissue>
        <tissue>Diencephalon</tissue>
        <tissue>Spinal cord</tissue>
        <tissue>Thymus</tissue>
    </source>
</reference>
<reference key="3">
    <citation type="journal article" date="2004" name="Genome Res.">
        <title>The status, quality, and expansion of the NIH full-length cDNA project: the Mammalian Gene Collection (MGC).</title>
        <authorList>
            <consortium name="The MGC Project Team"/>
        </authorList>
    </citation>
    <scope>NUCLEOTIDE SEQUENCE [LARGE SCALE MRNA]</scope>
    <source>
        <strain>FVB/N</strain>
        <tissue>Liver</tissue>
        <tissue>Salivary gland</tissue>
    </source>
</reference>
<reference key="4">
    <citation type="journal article" date="2006" name="J. Histochem. Cytochem.">
        <title>Subcellular localization of CIAPIN1.</title>
        <authorList>
            <person name="Hao Z."/>
            <person name="Li X."/>
            <person name="Qiao T."/>
            <person name="Du R."/>
            <person name="Zhang G."/>
            <person name="Fan D."/>
        </authorList>
    </citation>
    <scope>SUBCELLULAR LOCATION</scope>
</reference>
<reference key="5">
    <citation type="journal article" date="2010" name="Cell">
        <title>A tissue-specific atlas of mouse protein phosphorylation and expression.</title>
        <authorList>
            <person name="Huttlin E.L."/>
            <person name="Jedrychowski M.P."/>
            <person name="Elias J.E."/>
            <person name="Goswami T."/>
            <person name="Rad R."/>
            <person name="Beausoleil S.A."/>
            <person name="Villen J."/>
            <person name="Haas W."/>
            <person name="Sowa M.E."/>
            <person name="Gygi S.P."/>
        </authorList>
    </citation>
    <scope>PHOSPHORYLATION [LARGE SCALE ANALYSIS] AT SER-269</scope>
    <scope>IDENTIFICATION BY MASS SPECTROMETRY [LARGE SCALE ANALYSIS]</scope>
    <source>
        <tissue>Brain</tissue>
        <tissue>Brown adipose tissue</tissue>
        <tissue>Heart</tissue>
        <tissue>Kidney</tissue>
        <tissue>Liver</tissue>
        <tissue>Lung</tissue>
        <tissue>Pancreas</tissue>
        <tissue>Spleen</tissue>
        <tissue>Testis</tissue>
    </source>
</reference>
<comment type="function">
    <text evidence="2 3">Component of the cytosolic iron-sulfur (Fe-S) protein assembly (CIA) machinery required for the maturation of extramitochondrial Fe-S proteins. Part of an electron transfer chain functioning in an early step of cytosolic Fe-S biogenesis, facilitating the de novo assembly of a [4Fe-4S] cluster on the scaffold complex NUBP1-NUBP2. Electrons are transferred to CIAPIN1 from NADPH via the FAD- and FMN-containing protein NDOR1. NDOR1-CIAPIN1 are also required for the assembly of the diferric tyrosyl radical cofactor of ribonucleotide reductase (RNR), probably by providing electrons for reduction during radical cofactor maturation in the catalytic small subunit (By similarity). Has anti-apoptotic effects in the cell. Involved in negative control of cell death upon cytokine withdrawal. Promotes development of hematopoietic cells (PubMed:14970183).</text>
</comment>
<comment type="cofactor">
    <cofactor evidence="2">
        <name>[2Fe-2S] cluster</name>
        <dbReference type="ChEBI" id="CHEBI:190135"/>
    </cofactor>
</comment>
<comment type="cofactor">
    <cofactor evidence="2">
        <name>[4Fe-4S] cluster</name>
        <dbReference type="ChEBI" id="CHEBI:49883"/>
    </cofactor>
</comment>
<comment type="subunit">
    <text evidence="2">Monomer. Interacts with NDOR1. Interacts with CHCHD4.</text>
</comment>
<comment type="interaction">
    <interactant intactId="EBI-2943068">
        <id>Q8WTY4</id>
    </interactant>
    <interactant intactId="EBI-4319195">
        <id>Q9CQM9</id>
        <label>Glrx3</label>
    </interactant>
    <organismsDiffer>false</organismsDiffer>
    <experiments>4</experiments>
</comment>
<comment type="subcellular location">
    <subcellularLocation>
        <location evidence="2">Cytoplasm</location>
    </subcellularLocation>
    <subcellularLocation>
        <location evidence="2">Nucleus</location>
    </subcellularLocation>
    <subcellularLocation>
        <location evidence="2">Mitochondrion intermembrane space</location>
    </subcellularLocation>
</comment>
<comment type="developmental stage">
    <text>Expressed from early embryogenesis.</text>
</comment>
<comment type="induction">
    <text evidence="3">By cytokines such as IL3 and THPO.</text>
</comment>
<comment type="domain">
    <text evidence="2">The twin Cx2C motifs are involved in the recognition by the mitochondrial CHCHD4/MIA40-GFER/ERV1 disulfide relay system. The formation of 2 disulfide bonds in the Cx2C motifs through dithiol/disulfide exchange reactions effectively traps the protein in the mitochondrial intermembrane space.</text>
</comment>
<comment type="domain">
    <text evidence="2">The C-terminal domain binds 2 Fe-S clusters but is otherwise mostly in an intrinsically disordered conformation.</text>
</comment>
<comment type="domain">
    <text evidence="2">The N-terminal domain has structural similarity with S-adenosyl-L-methionine-dependent methyltransferases, but does not bind S-adenosyl-L-methionine. It is required for correct assembly of the 2 Fe-S clusters.</text>
</comment>
<comment type="disruption phenotype">
    <text evidence="3">Death in late gestation due to defective definitive hematopoiesis in the fetal liver, possibly due to initiated apoptosis in erythroid cells during terminal maturation.</text>
</comment>
<comment type="miscellaneous">
    <text>'Ana-mors-in' means 'anti-death molecule' in Latin.</text>
</comment>
<comment type="similarity">
    <text evidence="2">Belongs to the anamorsin family.</text>
</comment>
<dbReference type="EMBL" id="AY523555">
    <property type="protein sequence ID" value="AAS09959.1"/>
    <property type="molecule type" value="mRNA"/>
</dbReference>
<dbReference type="EMBL" id="AK076116">
    <property type="protein sequence ID" value="BAC36196.1"/>
    <property type="molecule type" value="mRNA"/>
</dbReference>
<dbReference type="EMBL" id="AK079615">
    <property type="protein sequence ID" value="BAC37702.1"/>
    <property type="molecule type" value="mRNA"/>
</dbReference>
<dbReference type="EMBL" id="AK088757">
    <property type="protein sequence ID" value="BAC40550.1"/>
    <property type="molecule type" value="mRNA"/>
</dbReference>
<dbReference type="EMBL" id="AK136821">
    <property type="protein sequence ID" value="BAE23137.1"/>
    <property type="molecule type" value="mRNA"/>
</dbReference>
<dbReference type="EMBL" id="AK146282">
    <property type="protein sequence ID" value="BAE27040.1"/>
    <property type="molecule type" value="mRNA"/>
</dbReference>
<dbReference type="EMBL" id="AK163705">
    <property type="protein sequence ID" value="BAE37466.1"/>
    <property type="molecule type" value="mRNA"/>
</dbReference>
<dbReference type="EMBL" id="AK168252">
    <property type="protein sequence ID" value="BAE40202.1"/>
    <property type="molecule type" value="mRNA"/>
</dbReference>
<dbReference type="EMBL" id="BC016261">
    <property type="protein sequence ID" value="AAH16261.1"/>
    <property type="molecule type" value="mRNA"/>
</dbReference>
<dbReference type="EMBL" id="BC021864">
    <property type="protein sequence ID" value="AAH21864.1"/>
    <property type="molecule type" value="mRNA"/>
</dbReference>
<dbReference type="EMBL" id="BC021949">
    <property type="protein sequence ID" value="AAH21949.1"/>
    <property type="molecule type" value="mRNA"/>
</dbReference>
<dbReference type="CCDS" id="CCDS22549.1"/>
<dbReference type="RefSeq" id="NP_598902.1">
    <property type="nucleotide sequence ID" value="NM_134141.4"/>
</dbReference>
<dbReference type="RefSeq" id="XP_006530623.1">
    <property type="nucleotide sequence ID" value="XM_006530560.3"/>
</dbReference>
<dbReference type="SMR" id="Q8WTY4"/>
<dbReference type="BioGRID" id="224515">
    <property type="interactions" value="6"/>
</dbReference>
<dbReference type="FunCoup" id="Q8WTY4">
    <property type="interactions" value="4826"/>
</dbReference>
<dbReference type="IntAct" id="Q8WTY4">
    <property type="interactions" value="3"/>
</dbReference>
<dbReference type="MINT" id="Q8WTY4"/>
<dbReference type="STRING" id="10090.ENSMUSP00000125451"/>
<dbReference type="GlyGen" id="Q8WTY4">
    <property type="glycosylation" value="1 site, 1 O-linked glycan (1 site)"/>
</dbReference>
<dbReference type="iPTMnet" id="Q8WTY4"/>
<dbReference type="PhosphoSitePlus" id="Q8WTY4"/>
<dbReference type="SwissPalm" id="Q8WTY4"/>
<dbReference type="PaxDb" id="10090-ENSMUSP00000125451"/>
<dbReference type="PeptideAtlas" id="Q8WTY4"/>
<dbReference type="ProteomicsDB" id="284157"/>
<dbReference type="Pumba" id="Q8WTY4"/>
<dbReference type="Antibodypedia" id="28857">
    <property type="antibodies" value="420 antibodies from 32 providers"/>
</dbReference>
<dbReference type="DNASU" id="109006"/>
<dbReference type="Ensembl" id="ENSMUST00000034233.15">
    <property type="protein sequence ID" value="ENSMUSP00000034233.9"/>
    <property type="gene ID" value="ENSMUSG00000031781.15"/>
</dbReference>
<dbReference type="Ensembl" id="ENSMUST00000162538.9">
    <property type="protein sequence ID" value="ENSMUSP00000125451.2"/>
    <property type="gene ID" value="ENSMUSG00000031781.15"/>
</dbReference>
<dbReference type="GeneID" id="109006"/>
<dbReference type="KEGG" id="mmu:109006"/>
<dbReference type="UCSC" id="uc009mxa.2">
    <property type="organism name" value="mouse"/>
</dbReference>
<dbReference type="AGR" id="MGI:1922083"/>
<dbReference type="CTD" id="57019"/>
<dbReference type="MGI" id="MGI:1922083">
    <property type="gene designation" value="Ciapin1"/>
</dbReference>
<dbReference type="VEuPathDB" id="HostDB:ENSMUSG00000031781"/>
<dbReference type="eggNOG" id="KOG4020">
    <property type="taxonomic scope" value="Eukaryota"/>
</dbReference>
<dbReference type="GeneTree" id="ENSGT00390000011417"/>
<dbReference type="HOGENOM" id="CLU_064393_2_0_1"/>
<dbReference type="InParanoid" id="Q8WTY4"/>
<dbReference type="OMA" id="GFINCRE"/>
<dbReference type="OrthoDB" id="311633at2759"/>
<dbReference type="PhylomeDB" id="Q8WTY4"/>
<dbReference type="TreeFam" id="TF314449"/>
<dbReference type="BioGRID-ORCS" id="109006">
    <property type="hits" value="10 hits in 80 CRISPR screens"/>
</dbReference>
<dbReference type="ChiTaRS" id="Ciapin1">
    <property type="organism name" value="mouse"/>
</dbReference>
<dbReference type="PRO" id="PR:Q8WTY4"/>
<dbReference type="Proteomes" id="UP000000589">
    <property type="component" value="Chromosome 8"/>
</dbReference>
<dbReference type="RNAct" id="Q8WTY4">
    <property type="molecule type" value="protein"/>
</dbReference>
<dbReference type="Bgee" id="ENSMUSG00000031781">
    <property type="expression patterns" value="Expressed in otic placode and 262 other cell types or tissues"/>
</dbReference>
<dbReference type="ExpressionAtlas" id="Q8WTY4">
    <property type="expression patterns" value="baseline and differential"/>
</dbReference>
<dbReference type="GO" id="GO:0005737">
    <property type="term" value="C:cytoplasm"/>
    <property type="evidence" value="ECO:0000314"/>
    <property type="project" value="UniProtKB"/>
</dbReference>
<dbReference type="GO" id="GO:0005758">
    <property type="term" value="C:mitochondrial intermembrane space"/>
    <property type="evidence" value="ECO:0007669"/>
    <property type="project" value="UniProtKB-SubCell"/>
</dbReference>
<dbReference type="GO" id="GO:0005730">
    <property type="term" value="C:nucleolus"/>
    <property type="evidence" value="ECO:0000314"/>
    <property type="project" value="UniProtKB"/>
</dbReference>
<dbReference type="GO" id="GO:0005654">
    <property type="term" value="C:nucleoplasm"/>
    <property type="evidence" value="ECO:0007669"/>
    <property type="project" value="Ensembl"/>
</dbReference>
<dbReference type="GO" id="GO:0051537">
    <property type="term" value="F:2 iron, 2 sulfur cluster binding"/>
    <property type="evidence" value="ECO:0000250"/>
    <property type="project" value="UniProtKB"/>
</dbReference>
<dbReference type="GO" id="GO:0051539">
    <property type="term" value="F:4 iron, 4 sulfur cluster binding"/>
    <property type="evidence" value="ECO:0007669"/>
    <property type="project" value="UniProtKB-KW"/>
</dbReference>
<dbReference type="GO" id="GO:0009055">
    <property type="term" value="F:electron transfer activity"/>
    <property type="evidence" value="ECO:0007669"/>
    <property type="project" value="UniProtKB-UniRule"/>
</dbReference>
<dbReference type="GO" id="GO:0046872">
    <property type="term" value="F:metal ion binding"/>
    <property type="evidence" value="ECO:0007669"/>
    <property type="project" value="UniProtKB-KW"/>
</dbReference>
<dbReference type="GO" id="GO:0006915">
    <property type="term" value="P:apoptotic process"/>
    <property type="evidence" value="ECO:0007669"/>
    <property type="project" value="UniProtKB-KW"/>
</dbReference>
<dbReference type="GO" id="GO:0030097">
    <property type="term" value="P:hemopoiesis"/>
    <property type="evidence" value="ECO:0000315"/>
    <property type="project" value="MGI"/>
</dbReference>
<dbReference type="GO" id="GO:0016226">
    <property type="term" value="P:iron-sulfur cluster assembly"/>
    <property type="evidence" value="ECO:0007669"/>
    <property type="project" value="UniProtKB-UniRule"/>
</dbReference>
<dbReference type="GO" id="GO:0043066">
    <property type="term" value="P:negative regulation of apoptotic process"/>
    <property type="evidence" value="ECO:0000315"/>
    <property type="project" value="MGI"/>
</dbReference>
<dbReference type="CDD" id="cd02440">
    <property type="entry name" value="AdoMet_MTases"/>
    <property type="match status" value="1"/>
</dbReference>
<dbReference type="FunFam" id="3.40.50.150:FF:000658">
    <property type="entry name" value="Anamorsin"/>
    <property type="match status" value="1"/>
</dbReference>
<dbReference type="Gene3D" id="3.40.50.150">
    <property type="entry name" value="Vaccinia Virus protein VP39"/>
    <property type="match status" value="1"/>
</dbReference>
<dbReference type="HAMAP" id="MF_03115">
    <property type="entry name" value="Anamorsin"/>
    <property type="match status" value="1"/>
</dbReference>
<dbReference type="InterPro" id="IPR007785">
    <property type="entry name" value="Anamorsin"/>
</dbReference>
<dbReference type="InterPro" id="IPR049011">
    <property type="entry name" value="Anamorsin_N_metazoan"/>
</dbReference>
<dbReference type="InterPro" id="IPR046408">
    <property type="entry name" value="CIAPIN1"/>
</dbReference>
<dbReference type="InterPro" id="IPR029063">
    <property type="entry name" value="SAM-dependent_MTases_sf"/>
</dbReference>
<dbReference type="PANTHER" id="PTHR13273">
    <property type="entry name" value="ANAMORSIN"/>
    <property type="match status" value="1"/>
</dbReference>
<dbReference type="PANTHER" id="PTHR13273:SF14">
    <property type="entry name" value="ANAMORSIN"/>
    <property type="match status" value="1"/>
</dbReference>
<dbReference type="Pfam" id="PF20922">
    <property type="entry name" value="Anamorsin_N"/>
    <property type="match status" value="1"/>
</dbReference>
<dbReference type="Pfam" id="PF05093">
    <property type="entry name" value="CIAPIN1"/>
    <property type="match status" value="2"/>
</dbReference>
<dbReference type="SUPFAM" id="SSF53335">
    <property type="entry name" value="S-adenosyl-L-methionine-dependent methyltransferases"/>
    <property type="match status" value="1"/>
</dbReference>
<protein>
    <recommendedName>
        <fullName evidence="2">Anamorsin</fullName>
    </recommendedName>
    <alternativeName>
        <fullName evidence="2">Cytokine-induced apoptosis inhibitor 1</fullName>
    </alternativeName>
    <alternativeName>
        <fullName evidence="2">Fe-S cluster assembly protein DRE2 homolog</fullName>
    </alternativeName>
</protein>
<organism>
    <name type="scientific">Mus musculus</name>
    <name type="common">Mouse</name>
    <dbReference type="NCBI Taxonomy" id="10090"/>
    <lineage>
        <taxon>Eukaryota</taxon>
        <taxon>Metazoa</taxon>
        <taxon>Chordata</taxon>
        <taxon>Craniata</taxon>
        <taxon>Vertebrata</taxon>
        <taxon>Euteleostomi</taxon>
        <taxon>Mammalia</taxon>
        <taxon>Eutheria</taxon>
        <taxon>Euarchontoglires</taxon>
        <taxon>Glires</taxon>
        <taxon>Rodentia</taxon>
        <taxon>Myomorpha</taxon>
        <taxon>Muroidea</taxon>
        <taxon>Muridae</taxon>
        <taxon>Murinae</taxon>
        <taxon>Mus</taxon>
        <taxon>Mus</taxon>
    </lineage>
</organism>